<dbReference type="EMBL" id="CU928163">
    <property type="protein sequence ID" value="CAR13815.1"/>
    <property type="molecule type" value="Genomic_DNA"/>
</dbReference>
<dbReference type="RefSeq" id="WP_000426124.1">
    <property type="nucleotide sequence ID" value="NC_011751.1"/>
</dbReference>
<dbReference type="RefSeq" id="YP_002413343.1">
    <property type="nucleotide sequence ID" value="NC_011751.1"/>
</dbReference>
<dbReference type="SMR" id="B7N5Q6"/>
<dbReference type="STRING" id="585056.ECUMN_2633"/>
<dbReference type="KEGG" id="eum:ECUMN_2633"/>
<dbReference type="PATRIC" id="fig|585056.7.peg.2815"/>
<dbReference type="HOGENOM" id="CLU_101021_1_0_6"/>
<dbReference type="Proteomes" id="UP000007097">
    <property type="component" value="Chromosome"/>
</dbReference>
<dbReference type="FunFam" id="1.10.3190.10:FF:000001">
    <property type="entry name" value="UPF0304 protein YfbU"/>
    <property type="match status" value="1"/>
</dbReference>
<dbReference type="Gene3D" id="1.10.287.680">
    <property type="entry name" value="Helix hairpin bin"/>
    <property type="match status" value="1"/>
</dbReference>
<dbReference type="Gene3D" id="1.10.3190.10">
    <property type="entry name" value="yfbu gene product, domain 2"/>
    <property type="match status" value="1"/>
</dbReference>
<dbReference type="HAMAP" id="MF_00762">
    <property type="entry name" value="UPF0304"/>
    <property type="match status" value="1"/>
</dbReference>
<dbReference type="InterPro" id="IPR005587">
    <property type="entry name" value="UPF0304_YfbU"/>
</dbReference>
<dbReference type="InterPro" id="IPR023146">
    <property type="entry name" value="YfbU_alpha-helical_sf"/>
</dbReference>
<dbReference type="InterPro" id="IPR023145">
    <property type="entry name" value="YfbU_helix-hairpin_sf"/>
</dbReference>
<dbReference type="NCBIfam" id="NF003936">
    <property type="entry name" value="PRK05445.1"/>
    <property type="match status" value="1"/>
</dbReference>
<dbReference type="Pfam" id="PF03887">
    <property type="entry name" value="YfbU"/>
    <property type="match status" value="1"/>
</dbReference>
<dbReference type="PIRSF" id="PIRSF006272">
    <property type="entry name" value="UCP006272"/>
    <property type="match status" value="1"/>
</dbReference>
<dbReference type="SUPFAM" id="SSF116960">
    <property type="entry name" value="YfbU-like"/>
    <property type="match status" value="1"/>
</dbReference>
<accession>B7N5Q6</accession>
<feature type="chain" id="PRO_1000198337" description="UPF0304 protein YfbU">
    <location>
        <begin position="1"/>
        <end position="164"/>
    </location>
</feature>
<evidence type="ECO:0000255" key="1">
    <source>
        <dbReference type="HAMAP-Rule" id="MF_00762"/>
    </source>
</evidence>
<organism>
    <name type="scientific">Escherichia coli O17:K52:H18 (strain UMN026 / ExPEC)</name>
    <dbReference type="NCBI Taxonomy" id="585056"/>
    <lineage>
        <taxon>Bacteria</taxon>
        <taxon>Pseudomonadati</taxon>
        <taxon>Pseudomonadota</taxon>
        <taxon>Gammaproteobacteria</taxon>
        <taxon>Enterobacterales</taxon>
        <taxon>Enterobacteriaceae</taxon>
        <taxon>Escherichia</taxon>
    </lineage>
</organism>
<sequence>MEMTNAQRLILSNQYKMMTMLDPANAERYRRLQTIIERGYGLQMRELDREFGELKEETCRTIIDIMEMYHALHVSWSNLQDQQSIDERRVTFLGFDAATEARYLGYVRFMVNVEGRYTHFDAGTHGFNAQTPMWEKYQRMLNVWHACPRQYHLSANEINQIINA</sequence>
<comment type="similarity">
    <text evidence="1">Belongs to the UPF0304 family.</text>
</comment>
<proteinExistence type="inferred from homology"/>
<name>YFBU_ECOLU</name>
<gene>
    <name evidence="1" type="primary">yfbU</name>
    <name type="ordered locus">ECUMN_2633</name>
</gene>
<protein>
    <recommendedName>
        <fullName evidence="1">UPF0304 protein YfbU</fullName>
    </recommendedName>
</protein>
<reference key="1">
    <citation type="journal article" date="2009" name="PLoS Genet.">
        <title>Organised genome dynamics in the Escherichia coli species results in highly diverse adaptive paths.</title>
        <authorList>
            <person name="Touchon M."/>
            <person name="Hoede C."/>
            <person name="Tenaillon O."/>
            <person name="Barbe V."/>
            <person name="Baeriswyl S."/>
            <person name="Bidet P."/>
            <person name="Bingen E."/>
            <person name="Bonacorsi S."/>
            <person name="Bouchier C."/>
            <person name="Bouvet O."/>
            <person name="Calteau A."/>
            <person name="Chiapello H."/>
            <person name="Clermont O."/>
            <person name="Cruveiller S."/>
            <person name="Danchin A."/>
            <person name="Diard M."/>
            <person name="Dossat C."/>
            <person name="Karoui M.E."/>
            <person name="Frapy E."/>
            <person name="Garry L."/>
            <person name="Ghigo J.M."/>
            <person name="Gilles A.M."/>
            <person name="Johnson J."/>
            <person name="Le Bouguenec C."/>
            <person name="Lescat M."/>
            <person name="Mangenot S."/>
            <person name="Martinez-Jehanne V."/>
            <person name="Matic I."/>
            <person name="Nassif X."/>
            <person name="Oztas S."/>
            <person name="Petit M.A."/>
            <person name="Pichon C."/>
            <person name="Rouy Z."/>
            <person name="Ruf C.S."/>
            <person name="Schneider D."/>
            <person name="Tourret J."/>
            <person name="Vacherie B."/>
            <person name="Vallenet D."/>
            <person name="Medigue C."/>
            <person name="Rocha E.P.C."/>
            <person name="Denamur E."/>
        </authorList>
    </citation>
    <scope>NUCLEOTIDE SEQUENCE [LARGE SCALE GENOMIC DNA]</scope>
    <source>
        <strain>UMN026 / ExPEC</strain>
    </source>
</reference>